<protein>
    <recommendedName>
        <fullName>Dual specificity mitogen-activated protein kinase kinase 7</fullName>
        <shortName>MAP kinase kinase 7</shortName>
        <shortName>MAPKK 7</shortName>
        <ecNumber evidence="9">2.7.12.2</ecNumber>
    </recommendedName>
    <alternativeName>
        <fullName>JNK-activating kinase 2</fullName>
    </alternativeName>
    <alternativeName>
        <fullName>MAPK/ERK kinase 7</fullName>
        <shortName>MEK 7</shortName>
    </alternativeName>
    <alternativeName>
        <fullName>c-Jun N-terminal kinase kinase 2</fullName>
        <shortName>JNK kinase 2</shortName>
        <shortName>JNKK 2</shortName>
    </alternativeName>
</protein>
<feature type="initiator methionine" description="Removed" evidence="2">
    <location>
        <position position="1"/>
    </location>
</feature>
<feature type="chain" id="PRO_0000271407" description="Dual specificity mitogen-activated protein kinase kinase 7">
    <location>
        <begin position="2"/>
        <end position="419"/>
    </location>
</feature>
<feature type="domain" description="Protein kinase" evidence="6">
    <location>
        <begin position="120"/>
        <end position="380"/>
    </location>
</feature>
<feature type="region of interest" description="Disordered" evidence="8">
    <location>
        <begin position="18"/>
        <end position="77"/>
    </location>
</feature>
<feature type="region of interest" description="D Domain" evidence="1">
    <location>
        <begin position="37"/>
        <end position="57"/>
    </location>
</feature>
<feature type="region of interest" description="DVD domain" evidence="1">
    <location>
        <begin position="377"/>
        <end position="400"/>
    </location>
</feature>
<feature type="coiled-coil region" evidence="5">
    <location>
        <begin position="2"/>
        <end position="30"/>
    </location>
</feature>
<feature type="compositionally biased region" description="Basic and acidic residues" evidence="8">
    <location>
        <begin position="18"/>
        <end position="30"/>
    </location>
</feature>
<feature type="compositionally biased region" description="Low complexity" evidence="8">
    <location>
        <begin position="36"/>
        <end position="63"/>
    </location>
</feature>
<feature type="active site" description="Proton acceptor" evidence="3 6 7">
    <location>
        <position position="243"/>
    </location>
</feature>
<feature type="binding site" evidence="3 6">
    <location>
        <begin position="126"/>
        <end position="134"/>
    </location>
    <ligand>
        <name>ATP</name>
        <dbReference type="ChEBI" id="CHEBI:30616"/>
    </ligand>
</feature>
<feature type="binding site" evidence="3 6">
    <location>
        <position position="149"/>
    </location>
    <ligand>
        <name>ATP</name>
        <dbReference type="ChEBI" id="CHEBI:30616"/>
    </ligand>
</feature>
<feature type="site" description="Cleavage; by anthrax lethal factor" evidence="1">
    <location>
        <begin position="44"/>
        <end position="45"/>
    </location>
</feature>
<feature type="site" description="Cleavage; by anthrax lethal factor" evidence="1">
    <location>
        <begin position="76"/>
        <end position="77"/>
    </location>
</feature>
<feature type="modified residue" description="N-acetylalanine" evidence="2">
    <location>
        <position position="2"/>
    </location>
</feature>
<feature type="modified residue" description="Phosphoserine; by MAP3K" evidence="1">
    <location>
        <position position="271"/>
    </location>
</feature>
<feature type="modified residue" description="Phosphothreonine; by MAP3K" evidence="1">
    <location>
        <position position="275"/>
    </location>
</feature>
<feature type="modified residue" description="Phosphoserine" evidence="2">
    <location>
        <position position="411"/>
    </location>
</feature>
<reference evidence="12" key="1">
    <citation type="submission" date="2005-01" db="EMBL/GenBank/DDBJ databases">
        <authorList>
            <person name="Itoh T."/>
            <person name="Horiuchi M."/>
            <person name="Itoh A."/>
        </authorList>
    </citation>
    <scope>NUCLEOTIDE SEQUENCE [MRNA]</scope>
    <source>
        <strain evidence="12">Sprague-Dawley</strain>
    </source>
</reference>
<reference evidence="11" key="2">
    <citation type="journal article" date="1999" name="Biochem. J.">
        <title>Stress- and cell type-dependent regulation of transfected c-Jun N-terminal kinase and mitogen-activated protein kinase kinase isoforms.</title>
        <authorList>
            <person name="Butterfield L."/>
            <person name="Zentrich E."/>
            <person name="Beekman A."/>
            <person name="Heasley L.E."/>
        </authorList>
    </citation>
    <scope>FUNCTION</scope>
    <scope>CATALYTIC ACTIVITY</scope>
</reference>
<reference key="3">
    <citation type="journal article" date="2003" name="Life Sci.">
        <title>Delayed activation and regulation of MKK7 in hippocampal CA1 region following global cerebral ischemia in rats.</title>
        <authorList>
            <person name="Zhang Q."/>
            <person name="Tian H."/>
            <person name="Fu X."/>
            <person name="Zhang G."/>
        </authorList>
    </citation>
    <scope>PHOSPHORYLATION</scope>
    <scope>INTERACTION WITH MAPK8/JNK1; MAPK9/JNK2; MAPK10/JNK3; MAP3K11/MLK3 AND MAP3K5/ASK1</scope>
</reference>
<reference key="4">
    <citation type="journal article" date="2007" name="Oncogene">
        <title>Differential regulation and properties of MAPKs.</title>
        <authorList>
            <person name="Raman M."/>
            <person name="Chen W."/>
            <person name="Cobb M.H."/>
        </authorList>
    </citation>
    <scope>REVIEW ON ACTIVITY REGULATION</scope>
</reference>
<reference key="5">
    <citation type="journal article" date="2010" name="J. Biochem.">
        <title>Diverse physiological functions of MKK4 and MKK7 during early embryogenesis.</title>
        <authorList>
            <person name="Asaoka Y."/>
            <person name="Nishina H."/>
        </authorList>
    </citation>
    <scope>REVIEW ON FUNCTION</scope>
</reference>
<reference key="6">
    <citation type="journal article" date="2011" name="Eur. J. Cell Biol.">
        <title>The bottleneck of JNK signaling: molecular and functional characteristics of MKK4 and MKK7.</title>
        <authorList>
            <person name="Haeusgen W."/>
            <person name="Herdegen T."/>
            <person name="Waetzig V."/>
        </authorList>
    </citation>
    <scope>REVIEW ON REGULATION</scope>
    <scope>REVIEW ON FUNCTION</scope>
</reference>
<sequence>MAASSLEQKLSRLEAKLKQENREARRRIDLNLDISPQRPRPTLQLPLANDGGSRSPSSESSPQHPTPPSRPRHMLGLPSTLFTPRSMESIEIDQKLQEIMKQTGYLTIGGQRYQAEINDLENLGEMGSGTCGQVWKMRFRKTGHIIAVKQMRRSGNKEENKRILMDLDVVLKSHDCPYIVQCFGTFITNTDVFIAMELMGTCAEKLKKRMQGPIPERILGKMTVAIVKALYYLKEKHGVIHRDVKPSNILLDERGQIKLCDFGISGRLVDSKAKTRSAGCAAYMAPERIDPPDPTKPDYDIRADVWSLGISLVELATGQFPYKNCKTDFEVLTKVLQEEPPLLPGHMGFSGDFQSFVKDCLTKDHRKRPKYNKLLEHSFIKHYETLEVDVASWFKDVMAKTESPRTSGVLSQHHLPFFR</sequence>
<gene>
    <name evidence="12" type="primary">Map2k7</name>
</gene>
<name>MP2K7_RAT</name>
<dbReference type="EC" id="2.7.12.2" evidence="9"/>
<dbReference type="EMBL" id="AY879265">
    <property type="protein sequence ID" value="AAX61178.1"/>
    <property type="molecule type" value="mRNA"/>
</dbReference>
<dbReference type="RefSeq" id="NP_001020596.1">
    <property type="nucleotide sequence ID" value="NM_001025425.2"/>
</dbReference>
<dbReference type="SMR" id="Q4KSH7"/>
<dbReference type="FunCoup" id="Q4KSH7">
    <property type="interactions" value="2478"/>
</dbReference>
<dbReference type="STRING" id="10116.ENSRNOP00000072160"/>
<dbReference type="PhosphoSitePlus" id="Q4KSH7"/>
<dbReference type="PaxDb" id="10116-ENSRNOP00000058535"/>
<dbReference type="PeptideAtlas" id="Q4KSH7"/>
<dbReference type="Ensembl" id="ENSRNOT00000104881.1">
    <property type="protein sequence ID" value="ENSRNOP00000086269.1"/>
    <property type="gene ID" value="ENSRNOG00000001047.7"/>
</dbReference>
<dbReference type="GeneID" id="363855"/>
<dbReference type="KEGG" id="rno:363855"/>
<dbReference type="UCSC" id="RGD:1560043">
    <property type="organism name" value="rat"/>
</dbReference>
<dbReference type="AGR" id="RGD:1560043"/>
<dbReference type="CTD" id="5609"/>
<dbReference type="RGD" id="1560043">
    <property type="gene designation" value="Map2k7"/>
</dbReference>
<dbReference type="eggNOG" id="KOG0983">
    <property type="taxonomic scope" value="Eukaryota"/>
</dbReference>
<dbReference type="GeneTree" id="ENSGT00940000158914"/>
<dbReference type="HOGENOM" id="CLU_000288_63_23_1"/>
<dbReference type="InParanoid" id="Q4KSH7"/>
<dbReference type="OrthoDB" id="10252354at2759"/>
<dbReference type="Reactome" id="R-RNO-2559580">
    <property type="pathway name" value="Oxidative Stress Induced Senescence"/>
</dbReference>
<dbReference type="Reactome" id="R-RNO-2871796">
    <property type="pathway name" value="FCERI mediated MAPK activation"/>
</dbReference>
<dbReference type="Reactome" id="R-RNO-450321">
    <property type="pathway name" value="JNK (c-Jun kinases) phosphorylation and activation mediated by activated human TAK1"/>
</dbReference>
<dbReference type="PRO" id="PR:Q4KSH7"/>
<dbReference type="Proteomes" id="UP000002494">
    <property type="component" value="Chromosome 12"/>
</dbReference>
<dbReference type="Bgee" id="ENSRNOG00000001047">
    <property type="expression patterns" value="Expressed in skeletal muscle tissue and 19 other cell types or tissues"/>
</dbReference>
<dbReference type="ExpressionAtlas" id="Q4KSH7">
    <property type="expression patterns" value="baseline and differential"/>
</dbReference>
<dbReference type="GO" id="GO:0005737">
    <property type="term" value="C:cytoplasm"/>
    <property type="evidence" value="ECO:0000250"/>
    <property type="project" value="UniProtKB"/>
</dbReference>
<dbReference type="GO" id="GO:0005634">
    <property type="term" value="C:nucleus"/>
    <property type="evidence" value="ECO:0000250"/>
    <property type="project" value="UniProtKB"/>
</dbReference>
<dbReference type="GO" id="GO:0005524">
    <property type="term" value="F:ATP binding"/>
    <property type="evidence" value="ECO:0000314"/>
    <property type="project" value="RGD"/>
</dbReference>
<dbReference type="GO" id="GO:0019899">
    <property type="term" value="F:enzyme binding"/>
    <property type="evidence" value="ECO:0000266"/>
    <property type="project" value="RGD"/>
</dbReference>
<dbReference type="GO" id="GO:0008545">
    <property type="term" value="F:JUN kinase kinase activity"/>
    <property type="evidence" value="ECO:0000314"/>
    <property type="project" value="RGD"/>
</dbReference>
<dbReference type="GO" id="GO:0000287">
    <property type="term" value="F:magnesium ion binding"/>
    <property type="evidence" value="ECO:0000314"/>
    <property type="project" value="UniProtKB"/>
</dbReference>
<dbReference type="GO" id="GO:0004707">
    <property type="term" value="F:MAP kinase activity"/>
    <property type="evidence" value="ECO:0000266"/>
    <property type="project" value="RGD"/>
</dbReference>
<dbReference type="GO" id="GO:0004708">
    <property type="term" value="F:MAP kinase kinase activity"/>
    <property type="evidence" value="ECO:0000314"/>
    <property type="project" value="UniProtKB"/>
</dbReference>
<dbReference type="GO" id="GO:0031435">
    <property type="term" value="F:mitogen-activated protein kinase kinase kinase binding"/>
    <property type="evidence" value="ECO:0000353"/>
    <property type="project" value="RGD"/>
</dbReference>
<dbReference type="GO" id="GO:0140677">
    <property type="term" value="F:molecular function activator activity"/>
    <property type="evidence" value="ECO:0000266"/>
    <property type="project" value="RGD"/>
</dbReference>
<dbReference type="GO" id="GO:0019901">
    <property type="term" value="F:protein kinase binding"/>
    <property type="evidence" value="ECO:0000266"/>
    <property type="project" value="RGD"/>
</dbReference>
<dbReference type="GO" id="GO:0019903">
    <property type="term" value="F:protein phosphatase binding"/>
    <property type="evidence" value="ECO:0000266"/>
    <property type="project" value="RGD"/>
</dbReference>
<dbReference type="GO" id="GO:0106310">
    <property type="term" value="F:protein serine kinase activity"/>
    <property type="evidence" value="ECO:0007669"/>
    <property type="project" value="RHEA"/>
</dbReference>
<dbReference type="GO" id="GO:0004713">
    <property type="term" value="F:protein tyrosine kinase activity"/>
    <property type="evidence" value="ECO:0007669"/>
    <property type="project" value="UniProtKB-KW"/>
</dbReference>
<dbReference type="GO" id="GO:0006915">
    <property type="term" value="P:apoptotic process"/>
    <property type="evidence" value="ECO:0007669"/>
    <property type="project" value="UniProtKB-KW"/>
</dbReference>
<dbReference type="GO" id="GO:0071347">
    <property type="term" value="P:cellular response to interleukin-1"/>
    <property type="evidence" value="ECO:0000266"/>
    <property type="project" value="RGD"/>
</dbReference>
<dbReference type="GO" id="GO:0071222">
    <property type="term" value="P:cellular response to lipopolysaccharide"/>
    <property type="evidence" value="ECO:0000266"/>
    <property type="project" value="RGD"/>
</dbReference>
<dbReference type="GO" id="GO:0071470">
    <property type="term" value="P:cellular response to osmotic stress"/>
    <property type="evidence" value="ECO:0000314"/>
    <property type="project" value="RGD"/>
</dbReference>
<dbReference type="GO" id="GO:0072709">
    <property type="term" value="P:cellular response to sorbitol"/>
    <property type="evidence" value="ECO:0000270"/>
    <property type="project" value="RGD"/>
</dbReference>
<dbReference type="GO" id="GO:0007254">
    <property type="term" value="P:JNK cascade"/>
    <property type="evidence" value="ECO:0000314"/>
    <property type="project" value="RGD"/>
</dbReference>
<dbReference type="GO" id="GO:0045893">
    <property type="term" value="P:positive regulation of DNA-templated transcription"/>
    <property type="evidence" value="ECO:0000250"/>
    <property type="project" value="UniProtKB"/>
</dbReference>
<dbReference type="GO" id="GO:0070374">
    <property type="term" value="P:positive regulation of ERK1 and ERK2 cascade"/>
    <property type="evidence" value="ECO:0000250"/>
    <property type="project" value="UniProtKB"/>
</dbReference>
<dbReference type="GO" id="GO:0046330">
    <property type="term" value="P:positive regulation of JNK cascade"/>
    <property type="evidence" value="ECO:0000314"/>
    <property type="project" value="RGD"/>
</dbReference>
<dbReference type="GO" id="GO:0043525">
    <property type="term" value="P:positive regulation of neuron apoptotic process"/>
    <property type="evidence" value="ECO:0000315"/>
    <property type="project" value="RGD"/>
</dbReference>
<dbReference type="GO" id="GO:0032206">
    <property type="term" value="P:positive regulation of telomere maintenance"/>
    <property type="evidence" value="ECO:0000266"/>
    <property type="project" value="RGD"/>
</dbReference>
<dbReference type="GO" id="GO:2000671">
    <property type="term" value="P:regulation of motor neuron apoptotic process"/>
    <property type="evidence" value="ECO:0000266"/>
    <property type="project" value="RGD"/>
</dbReference>
<dbReference type="GO" id="GO:0009408">
    <property type="term" value="P:response to heat"/>
    <property type="evidence" value="ECO:0000266"/>
    <property type="project" value="RGD"/>
</dbReference>
<dbReference type="GO" id="GO:0006970">
    <property type="term" value="P:response to osmotic stress"/>
    <property type="evidence" value="ECO:0000314"/>
    <property type="project" value="UniProtKB"/>
</dbReference>
<dbReference type="GO" id="GO:0034612">
    <property type="term" value="P:response to tumor necrosis factor"/>
    <property type="evidence" value="ECO:0000266"/>
    <property type="project" value="RGD"/>
</dbReference>
<dbReference type="GO" id="GO:0009411">
    <property type="term" value="P:response to UV"/>
    <property type="evidence" value="ECO:0000266"/>
    <property type="project" value="RGD"/>
</dbReference>
<dbReference type="GO" id="GO:0009611">
    <property type="term" value="P:response to wounding"/>
    <property type="evidence" value="ECO:0000266"/>
    <property type="project" value="RGD"/>
</dbReference>
<dbReference type="GO" id="GO:0051403">
    <property type="term" value="P:stress-activated MAPK cascade"/>
    <property type="evidence" value="ECO:0000314"/>
    <property type="project" value="UniProtKB"/>
</dbReference>
<dbReference type="CDD" id="cd06618">
    <property type="entry name" value="PKc_MKK7"/>
    <property type="match status" value="1"/>
</dbReference>
<dbReference type="FunFam" id="3.30.200.20:FF:000040">
    <property type="entry name" value="Dual specificity mitogen-activated protein kinase kinase"/>
    <property type="match status" value="1"/>
</dbReference>
<dbReference type="FunFam" id="1.10.510.10:FF:000214">
    <property type="entry name" value="Dual specificity mitogen-activated protein kinase kinase 7"/>
    <property type="match status" value="1"/>
</dbReference>
<dbReference type="Gene3D" id="3.30.200.20">
    <property type="entry name" value="Phosphorylase Kinase, domain 1"/>
    <property type="match status" value="1"/>
</dbReference>
<dbReference type="Gene3D" id="1.10.510.10">
    <property type="entry name" value="Transferase(Phosphotransferase) domain 1"/>
    <property type="match status" value="1"/>
</dbReference>
<dbReference type="InterPro" id="IPR052468">
    <property type="entry name" value="Dual_spec_MAPK_kinase"/>
</dbReference>
<dbReference type="InterPro" id="IPR011009">
    <property type="entry name" value="Kinase-like_dom_sf"/>
</dbReference>
<dbReference type="InterPro" id="IPR000719">
    <property type="entry name" value="Prot_kinase_dom"/>
</dbReference>
<dbReference type="InterPro" id="IPR008271">
    <property type="entry name" value="Ser/Thr_kinase_AS"/>
</dbReference>
<dbReference type="PANTHER" id="PTHR47238:SF2">
    <property type="entry name" value="DUAL SPECIFICITY MITOGEN-ACTIVATED PROTEIN KINASE KINASE HEMIPTEROUS"/>
    <property type="match status" value="1"/>
</dbReference>
<dbReference type="PANTHER" id="PTHR47238">
    <property type="entry name" value="MITOGEN-ACTIVATED PROTEIN KINASE KINASE 5"/>
    <property type="match status" value="1"/>
</dbReference>
<dbReference type="Pfam" id="PF00069">
    <property type="entry name" value="Pkinase"/>
    <property type="match status" value="1"/>
</dbReference>
<dbReference type="SMART" id="SM00220">
    <property type="entry name" value="S_TKc"/>
    <property type="match status" value="1"/>
</dbReference>
<dbReference type="SUPFAM" id="SSF56112">
    <property type="entry name" value="Protein kinase-like (PK-like)"/>
    <property type="match status" value="1"/>
</dbReference>
<dbReference type="PROSITE" id="PS50011">
    <property type="entry name" value="PROTEIN_KINASE_DOM"/>
    <property type="match status" value="1"/>
</dbReference>
<dbReference type="PROSITE" id="PS00108">
    <property type="entry name" value="PROTEIN_KINASE_ST"/>
    <property type="match status" value="1"/>
</dbReference>
<organism>
    <name type="scientific">Rattus norvegicus</name>
    <name type="common">Rat</name>
    <dbReference type="NCBI Taxonomy" id="10116"/>
    <lineage>
        <taxon>Eukaryota</taxon>
        <taxon>Metazoa</taxon>
        <taxon>Chordata</taxon>
        <taxon>Craniata</taxon>
        <taxon>Vertebrata</taxon>
        <taxon>Euteleostomi</taxon>
        <taxon>Mammalia</taxon>
        <taxon>Eutheria</taxon>
        <taxon>Euarchontoglires</taxon>
        <taxon>Glires</taxon>
        <taxon>Rodentia</taxon>
        <taxon>Myomorpha</taxon>
        <taxon>Muroidea</taxon>
        <taxon>Muridae</taxon>
        <taxon>Murinae</taxon>
        <taxon>Rattus</taxon>
    </lineage>
</organism>
<evidence type="ECO:0000250" key="1"/>
<evidence type="ECO:0000250" key="2">
    <source>
        <dbReference type="UniProtKB" id="O14733"/>
    </source>
</evidence>
<evidence type="ECO:0000250" key="3">
    <source>
        <dbReference type="UniProtKB" id="Q13131"/>
    </source>
</evidence>
<evidence type="ECO:0000250" key="4">
    <source>
        <dbReference type="UniProtKB" id="Q8CE90"/>
    </source>
</evidence>
<evidence type="ECO:0000255" key="5"/>
<evidence type="ECO:0000255" key="6">
    <source>
        <dbReference type="PROSITE-ProRule" id="PRU00159"/>
    </source>
</evidence>
<evidence type="ECO:0000255" key="7">
    <source>
        <dbReference type="PROSITE-ProRule" id="PRU10027"/>
    </source>
</evidence>
<evidence type="ECO:0000256" key="8">
    <source>
        <dbReference type="SAM" id="MobiDB-lite"/>
    </source>
</evidence>
<evidence type="ECO:0000269" key="9">
    <source>
    </source>
</evidence>
<evidence type="ECO:0000269" key="10">
    <source>
    </source>
</evidence>
<evidence type="ECO:0000305" key="11"/>
<evidence type="ECO:0000312" key="12">
    <source>
        <dbReference type="EMBL" id="AAX61178.1"/>
    </source>
</evidence>
<proteinExistence type="evidence at protein level"/>
<comment type="function">
    <text evidence="4 9">Dual specificity protein kinase which acts as an essential component of the MAP kinase signal transduction pathway. Essential component of the stress-activated protein kinase/c-Jun N-terminal kinase (SAP/JNK) signaling pathway. With MAP2K4/MKK4, is the one of the only known kinase to directly activate the stress-activated protein kinase/c-Jun N-terminal kinases MAPK8/JNK1, MAPK9/JNK2 and MAPK10/JNK3. MAP2K4/MKK4 and MAP2K7/MKK7 both activate the JNKs by phosphorylation, but they differ in their preference for the phosphorylation site in the Thr-Pro-Tyr motif. MAP2K4/MKK4 shows preference for phosphorylation of the Tyr residue and MAP2K7/MKK7 for the Thr residue. The monophosphorylation of JNKs on the Thr residue is sufficient to increase JNK activity indicating that MAP2K7/MKK7 is important to trigger JNK activity, while the additional phosphorylation of the Tyr residue by MAP2K4/MKK4 ensures optimal JNK activation. Has a specific role in JNK signal transduction pathway activated by pro-inflammatory cytokines. The MKK/JNK signaling pathway is also involved in mitochondrial death signaling pathway, including the release cytochrome c, leading to apoptosis. Part of a non-canonical MAPK signaling pathway, composed of the upstream MAP3K12 kinase and downstream MAP kinases MAPK1/ERK2 and MAPK3/ERK1, that enhances the AP-1-mediated transcription of APP in response to APOE (By similarity).</text>
</comment>
<comment type="catalytic activity">
    <reaction evidence="9">
        <text>L-seryl-[protein] + ATP = O-phospho-L-seryl-[protein] + ADP + H(+)</text>
        <dbReference type="Rhea" id="RHEA:17989"/>
        <dbReference type="Rhea" id="RHEA-COMP:9863"/>
        <dbReference type="Rhea" id="RHEA-COMP:11604"/>
        <dbReference type="ChEBI" id="CHEBI:15378"/>
        <dbReference type="ChEBI" id="CHEBI:29999"/>
        <dbReference type="ChEBI" id="CHEBI:30616"/>
        <dbReference type="ChEBI" id="CHEBI:83421"/>
        <dbReference type="ChEBI" id="CHEBI:456216"/>
        <dbReference type="EC" id="2.7.12.2"/>
    </reaction>
</comment>
<comment type="catalytic activity">
    <reaction evidence="9">
        <text>L-threonyl-[protein] + ATP = O-phospho-L-threonyl-[protein] + ADP + H(+)</text>
        <dbReference type="Rhea" id="RHEA:46608"/>
        <dbReference type="Rhea" id="RHEA-COMP:11060"/>
        <dbReference type="Rhea" id="RHEA-COMP:11605"/>
        <dbReference type="ChEBI" id="CHEBI:15378"/>
        <dbReference type="ChEBI" id="CHEBI:30013"/>
        <dbReference type="ChEBI" id="CHEBI:30616"/>
        <dbReference type="ChEBI" id="CHEBI:61977"/>
        <dbReference type="ChEBI" id="CHEBI:456216"/>
        <dbReference type="EC" id="2.7.12.2"/>
    </reaction>
</comment>
<comment type="catalytic activity">
    <reaction evidence="9">
        <text>L-tyrosyl-[protein] + ATP = O-phospho-L-tyrosyl-[protein] + ADP + H(+)</text>
        <dbReference type="Rhea" id="RHEA:10596"/>
        <dbReference type="Rhea" id="RHEA-COMP:10136"/>
        <dbReference type="Rhea" id="RHEA-COMP:20101"/>
        <dbReference type="ChEBI" id="CHEBI:15378"/>
        <dbReference type="ChEBI" id="CHEBI:30616"/>
        <dbReference type="ChEBI" id="CHEBI:46858"/>
        <dbReference type="ChEBI" id="CHEBI:61978"/>
        <dbReference type="ChEBI" id="CHEBI:456216"/>
        <dbReference type="EC" id="2.7.12.2"/>
    </reaction>
</comment>
<comment type="cofactor">
    <cofactor evidence="9">
        <name>Mg(2+)</name>
        <dbReference type="ChEBI" id="CHEBI:18420"/>
    </cofactor>
</comment>
<comment type="activity regulation">
    <text>Activated by phosphorylation by specific MAP kinase kinase kinases such as MAP3K1/MEKK1, MAP3K3/MEKK3, MAP3K11/MLK3 and MAP3K12/DLK.</text>
</comment>
<comment type="subunit">
    <text evidence="2 4">Interacts with VRK2 (By similarity). Interacts (via its D domain) with its substrates MAPK8/JNK1, MAPK9/JNK2 and MAPK10/JNK3. Interacts (via its DVD domain) with MAP3Ks activators like MAP3K5/ASK1 and MAP3K1/MEKK1. Interacts with MAPK8IP1/JIP1, MAPK8IP2/JIP2 and MAPK8IP3/JIP3 scaffold proteins. Interacts with RASSF7, the interaction promotes phosphorylation. Found in a complex with SH3RF1, RAC1, MAP3K11/MLK3, MAPK8IP1/JIP1 and MAPK8/JNK1. Found in a complex with SH3RF1, RAC2, MAP3K7/TAK1, MAPK8IP1/JIP1, MAPK8/JNK1 and MAPK9/JNK2 (By similarity).</text>
</comment>
<comment type="subcellular location">
    <subcellularLocation>
        <location evidence="4">Nucleus</location>
    </subcellularLocation>
    <subcellularLocation>
        <location evidence="4">Cytoplasm</location>
    </subcellularLocation>
</comment>
<comment type="domain">
    <text>The DVD domain (residues 377-400) contains a conserved docking site and is found in the mammalian MAP kinase kinases (MAP2Ks). The DVD sites bind to their specific upstream MAP kinase kinase kinases (MAP3Ks) and are essential for activation.</text>
</comment>
<comment type="domain">
    <text>The D domain (residues 37-57) contains a conserved docking site and is required for the binding to MAPK substrates.</text>
</comment>
<comment type="PTM">
    <text evidence="10">Activated by phosphorylation on Ser-271 and Thr-275 by MAP kinase kinase kinases (MAP3Ks).</text>
</comment>
<comment type="similarity">
    <text evidence="11">Belongs to the protein kinase superfamily. STE Ser/Thr protein kinase family. MAP kinase kinase subfamily.</text>
</comment>
<keyword id="KW-0007">Acetylation</keyword>
<keyword id="KW-0053">Apoptosis</keyword>
<keyword id="KW-0067">ATP-binding</keyword>
<keyword id="KW-0175">Coiled coil</keyword>
<keyword id="KW-0963">Cytoplasm</keyword>
<keyword id="KW-0418">Kinase</keyword>
<keyword id="KW-0460">Magnesium</keyword>
<keyword id="KW-0479">Metal-binding</keyword>
<keyword id="KW-0547">Nucleotide-binding</keyword>
<keyword id="KW-0539">Nucleus</keyword>
<keyword id="KW-0597">Phosphoprotein</keyword>
<keyword id="KW-1185">Reference proteome</keyword>
<keyword id="KW-0723">Serine/threonine-protein kinase</keyword>
<keyword id="KW-0346">Stress response</keyword>
<keyword id="KW-0808">Transferase</keyword>
<keyword id="KW-0829">Tyrosine-protein kinase</keyword>
<accession>Q4KSH7</accession>